<proteinExistence type="evidence at protein level"/>
<organism>
    <name type="scientific">Candida albicans (strain SC5314 / ATCC MYA-2876)</name>
    <name type="common">Yeast</name>
    <dbReference type="NCBI Taxonomy" id="237561"/>
    <lineage>
        <taxon>Eukaryota</taxon>
        <taxon>Fungi</taxon>
        <taxon>Dikarya</taxon>
        <taxon>Ascomycota</taxon>
        <taxon>Saccharomycotina</taxon>
        <taxon>Pichiomycetes</taxon>
        <taxon>Debaryomycetaceae</taxon>
        <taxon>Candida/Lodderomyces clade</taxon>
        <taxon>Candida</taxon>
    </lineage>
</organism>
<dbReference type="EC" id="6.5.1.3" evidence="2"/>
<dbReference type="EMBL" id="L13380">
    <property type="protein sequence ID" value="AAA34373.2"/>
    <property type="molecule type" value="Genomic_DNA"/>
</dbReference>
<dbReference type="EMBL" id="AP006852">
    <property type="protein sequence ID" value="BAE44723.1"/>
    <property type="molecule type" value="Genomic_DNA"/>
</dbReference>
<dbReference type="EMBL" id="CP017629">
    <property type="protein sequence ID" value="AOW30569.1"/>
    <property type="molecule type" value="Genomic_DNA"/>
</dbReference>
<dbReference type="RefSeq" id="XP_721349.1">
    <property type="nucleotide sequence ID" value="XM_716256.2"/>
</dbReference>
<dbReference type="PDB" id="5U32">
    <property type="method" value="X-ray"/>
    <property type="resolution" value="2.19 A"/>
    <property type="chains" value="A=400-635"/>
</dbReference>
<dbReference type="PDB" id="6TZM">
    <property type="method" value="X-ray"/>
    <property type="resolution" value="1.71 A"/>
    <property type="chains" value="A=401-832"/>
</dbReference>
<dbReference type="PDB" id="6TZO">
    <property type="method" value="X-ray"/>
    <property type="resolution" value="1.69 A"/>
    <property type="chains" value="A=401-832"/>
</dbReference>
<dbReference type="PDB" id="6TZX">
    <property type="method" value="X-ray"/>
    <property type="resolution" value="1.53 A"/>
    <property type="chains" value="A=401-635"/>
</dbReference>
<dbReference type="PDB" id="6U00">
    <property type="method" value="X-ray"/>
    <property type="resolution" value="1.98 A"/>
    <property type="chains" value="A/B=401-832"/>
</dbReference>
<dbReference type="PDB" id="6U03">
    <property type="method" value="X-ray"/>
    <property type="resolution" value="1.85 A"/>
    <property type="chains" value="A=401-635"/>
</dbReference>
<dbReference type="PDB" id="6U05">
    <property type="method" value="X-ray"/>
    <property type="resolution" value="1.95 A"/>
    <property type="chains" value="A=401-832"/>
</dbReference>
<dbReference type="PDBsum" id="5U32"/>
<dbReference type="PDBsum" id="6TZM"/>
<dbReference type="PDBsum" id="6TZO"/>
<dbReference type="PDBsum" id="6TZX"/>
<dbReference type="PDBsum" id="6U00"/>
<dbReference type="PDBsum" id="6U03"/>
<dbReference type="PDBsum" id="6U05"/>
<dbReference type="SMR" id="P43075"/>
<dbReference type="FunCoup" id="P43075">
    <property type="interactions" value="103"/>
</dbReference>
<dbReference type="STRING" id="237561.P43075"/>
<dbReference type="EnsemblFungi" id="C7_02060W_A-T">
    <property type="protein sequence ID" value="C7_02060W_A-T-p1"/>
    <property type="gene ID" value="C7_02060W_A"/>
</dbReference>
<dbReference type="GeneID" id="3636947"/>
<dbReference type="KEGG" id="cal:CAALFM_C702060WA"/>
<dbReference type="CGD" id="CAL0000175809">
    <property type="gene designation" value="LIG1"/>
</dbReference>
<dbReference type="VEuPathDB" id="FungiDB:C7_02060W_A"/>
<dbReference type="eggNOG" id="ENOG502QQB9">
    <property type="taxonomic scope" value="Eukaryota"/>
</dbReference>
<dbReference type="HOGENOM" id="CLU_010316_1_0_1"/>
<dbReference type="InParanoid" id="P43075"/>
<dbReference type="OrthoDB" id="276239at2759"/>
<dbReference type="Proteomes" id="UP000000559">
    <property type="component" value="Chromosome 7"/>
</dbReference>
<dbReference type="GO" id="GO:0005634">
    <property type="term" value="C:nucleus"/>
    <property type="evidence" value="ECO:0000318"/>
    <property type="project" value="GO_Central"/>
</dbReference>
<dbReference type="GO" id="GO:0005524">
    <property type="term" value="F:ATP binding"/>
    <property type="evidence" value="ECO:0007669"/>
    <property type="project" value="UniProtKB-KW"/>
</dbReference>
<dbReference type="GO" id="GO:0004519">
    <property type="term" value="F:endonuclease activity"/>
    <property type="evidence" value="ECO:0007669"/>
    <property type="project" value="UniProtKB-KW"/>
</dbReference>
<dbReference type="GO" id="GO:0051730">
    <property type="term" value="F:GTP-dependent polyribonucleotide 5'-hydroxyl-kinase activity"/>
    <property type="evidence" value="ECO:0000314"/>
    <property type="project" value="CGD"/>
</dbReference>
<dbReference type="GO" id="GO:0008081">
    <property type="term" value="F:phosphoric diester hydrolase activity"/>
    <property type="evidence" value="ECO:0007669"/>
    <property type="project" value="InterPro"/>
</dbReference>
<dbReference type="GO" id="GO:0003972">
    <property type="term" value="F:RNA ligase (ATP) activity"/>
    <property type="evidence" value="ECO:0000314"/>
    <property type="project" value="CGD"/>
</dbReference>
<dbReference type="GO" id="GO:0006388">
    <property type="term" value="P:tRNA splicing, via endonucleolytic cleavage and ligation"/>
    <property type="evidence" value="ECO:0000316"/>
    <property type="project" value="CGD"/>
</dbReference>
<dbReference type="FunFam" id="3.40.50.300:FF:001934">
    <property type="entry name" value="tRNA ligase"/>
    <property type="match status" value="1"/>
</dbReference>
<dbReference type="Gene3D" id="3.40.50.300">
    <property type="entry name" value="P-loop containing nucleotide triphosphate hydrolases"/>
    <property type="match status" value="1"/>
</dbReference>
<dbReference type="InterPro" id="IPR027417">
    <property type="entry name" value="P-loop_NTPase"/>
</dbReference>
<dbReference type="InterPro" id="IPR019039">
    <property type="entry name" value="T4-Rnl1-like_N"/>
</dbReference>
<dbReference type="InterPro" id="IPR012387">
    <property type="entry name" value="Trl1_fun"/>
</dbReference>
<dbReference type="InterPro" id="IPR015966">
    <property type="entry name" value="tRNA_lig_kin_fungi"/>
</dbReference>
<dbReference type="InterPro" id="IPR015965">
    <property type="entry name" value="tRNA_lig_PDEase"/>
</dbReference>
<dbReference type="PANTHER" id="PTHR32004">
    <property type="entry name" value="TRNA LIGASE"/>
    <property type="match status" value="1"/>
</dbReference>
<dbReference type="PANTHER" id="PTHR32004:SF1">
    <property type="entry name" value="TRNA LIGASE"/>
    <property type="match status" value="1"/>
</dbReference>
<dbReference type="Pfam" id="PF09511">
    <property type="entry name" value="RNA_lig_T4_1"/>
    <property type="match status" value="1"/>
</dbReference>
<dbReference type="Pfam" id="PF08302">
    <property type="entry name" value="tRNA_lig_CPD"/>
    <property type="match status" value="1"/>
</dbReference>
<dbReference type="Pfam" id="PF08303">
    <property type="entry name" value="tRNA_lig_kinase"/>
    <property type="match status" value="1"/>
</dbReference>
<dbReference type="PIRSF" id="PIRSF019634">
    <property type="entry name" value="tRNA_lig_yeast"/>
    <property type="match status" value="1"/>
</dbReference>
<dbReference type="SUPFAM" id="SSF56091">
    <property type="entry name" value="DNA ligase/mRNA capping enzyme, catalytic domain"/>
    <property type="match status" value="1"/>
</dbReference>
<dbReference type="SUPFAM" id="SSF52540">
    <property type="entry name" value="P-loop containing nucleoside triphosphate hydrolases"/>
    <property type="match status" value="1"/>
</dbReference>
<protein>
    <recommendedName>
        <fullName>tRNA ligase</fullName>
        <ecNumber evidence="2">6.5.1.3</ecNumber>
    </recommendedName>
</protein>
<sequence length="832" mass="95551">MKDSQSDIIELCNKLNEATKLKRNGKSIKLTNFVSNTQIKLDSWKFLEWDYGKPSVQLPIQARGLFTLNNDTIAVRGYDKFFNVEEKPFTKETNLKTSTHGPYEVTLKENGCIIFISGLSTGDIVVCSKHSTGDRIDDNESDKTTTATATATAPTRNHAKQGEFELLQQFDGDQQKVKQLAHYLYENNLTVVAELCDDEFEEHVLPYPKDKSGLYVHGLNYNTITFKTLPMDQVLQFAKEWGFKYVSYLTYDNADELFKFLHKCSETGTYNGREIEGFVIRCHRQSHTNGDTDGDCFFFKYKFEQPYLLYRQFREVTKQLLNGTPINSIKIKKNKPITKKYLQFVEKLFEQEPEIARNFENGFDIIKVRQLFLQSLNETNGMNLLSIDSELSDQLKNLALANGNEGLSTTTKYIFVPIATIGCGKTTVFNTLNNLFPQWTHIQNDNISKKAKLKICDLTLLALEDDDQSVVLFDRNNSASRERRQIFTTIDQKRDEHLDDTVDLKYIAINFIPEDLSEEELWDITYNRVIQRGDNHQSIKSQSDENLVESVMKGFIQRYQPINTSRSPDDQFDHVIHLKLSKDENSSKSSLENVRIIIDDLVQNFPDLIKEKPADELINECFQKALDYKPTFVKNMTANTIKKDPTYYGIAMHYSSILENLEIVSHNEHFQNIKSHIQTEFHVTLGHIASSKQDKAGRVKWKKLVKTLGKGDPNKPKSALKFFADVKLLQIVINTDKLACIKVEILKIYDTNDVLQSEIEPINKQLHITIGCIPPATAVESNITLEELYDNPDEQELKPDGTYKCGDDTLHVFNFDNPDLKLFSQQLFVAYQ</sequence>
<gene>
    <name type="primary">LIG1</name>
    <name type="synonym">RLG1</name>
    <name type="synonym">TRL1</name>
    <name type="ordered locus">CAALFM_C702060WA</name>
    <name type="ORF">CaJ7.0238</name>
    <name type="ORF">CaO19.13864</name>
    <name type="ORF">CaO19.6511</name>
</gene>
<accession>P43075</accession>
<accession>A0A1D8PR09</accession>
<accession>Q3MPD7</accession>
<accession>Q5AH27</accession>
<comment type="function">
    <text evidence="1">One of the two proteins required for the splicing of precursor tRNA molecules containing introns. The ligation activity requires three enzymatic activities: phosphorylation of the 5' terminus of the 3' half-tRNA in the presence of ATP, opening of the 2'3'-cyclic phosphodiester bond of the 5' half-tRNA leaving a 2'-phosphomonoester and ligation of the two tRNA halves in an ATP-dependent reaction.</text>
</comment>
<comment type="catalytic activity">
    <reaction evidence="2">
        <text>ATP + (ribonucleotide)n-3'-hydroxyl + 5'-phospho-(ribonucleotide)m = (ribonucleotide)n+m + AMP + diphosphate.</text>
        <dbReference type="EC" id="6.5.1.3"/>
    </reaction>
</comment>
<comment type="domain">
    <text evidence="1">Has three domains each corresponding to an enzymatic activity, namely in N- to C-terminal order: ligase, kinase and cyclic phosphodiesterase (CPDase).</text>
</comment>
<comment type="similarity">
    <text evidence="2">Belongs to the TRL1 family.</text>
</comment>
<reference key="1">
    <citation type="journal article" date="1994" name="Gene">
        <title>Isolation and sequence of the t-RNA ligase-encoding gene of Candida albicans.</title>
        <authorList>
            <person name="Baymiller J."/>
            <person name="Jennings S."/>
            <person name="Kienzle B."/>
            <person name="Gorman J.A."/>
            <person name="Kelly R."/>
            <person name="McCullough J.E."/>
        </authorList>
    </citation>
    <scope>NUCLEOTIDE SEQUENCE [GENOMIC DNA]</scope>
    <source>
        <strain>SC5314 / ATCC MYA-2876</strain>
    </source>
</reference>
<reference key="2">
    <citation type="journal article" date="2005" name="Genetics">
        <title>Sequence finishing and gene mapping for Candida albicans chromosome 7 and syntenic analysis against the Saccharomyces cerevisiae genome.</title>
        <authorList>
            <person name="Chibana H."/>
            <person name="Oka N."/>
            <person name="Nakayama H."/>
            <person name="Aoyama T."/>
            <person name="Magee B.B."/>
            <person name="Magee P.T."/>
            <person name="Mikami Y."/>
        </authorList>
    </citation>
    <scope>NUCLEOTIDE SEQUENCE [LARGE SCALE GENOMIC DNA]</scope>
    <source>
        <strain>SC5314 / ATCC MYA-2876</strain>
    </source>
</reference>
<reference key="3">
    <citation type="journal article" date="2004" name="Proc. Natl. Acad. Sci. U.S.A.">
        <title>The diploid genome sequence of Candida albicans.</title>
        <authorList>
            <person name="Jones T."/>
            <person name="Federspiel N.A."/>
            <person name="Chibana H."/>
            <person name="Dungan J."/>
            <person name="Kalman S."/>
            <person name="Magee B.B."/>
            <person name="Newport G."/>
            <person name="Thorstenson Y.R."/>
            <person name="Agabian N."/>
            <person name="Magee P.T."/>
            <person name="Davis R.W."/>
            <person name="Scherer S."/>
        </authorList>
    </citation>
    <scope>NUCLEOTIDE SEQUENCE [LARGE SCALE GENOMIC DNA]</scope>
    <source>
        <strain>SC5314 / ATCC MYA-2876</strain>
    </source>
</reference>
<reference key="4">
    <citation type="journal article" date="2007" name="Genome Biol.">
        <title>Assembly of the Candida albicans genome into sixteen supercontigs aligned on the eight chromosomes.</title>
        <authorList>
            <person name="van het Hoog M."/>
            <person name="Rast T.J."/>
            <person name="Martchenko M."/>
            <person name="Grindle S."/>
            <person name="Dignard D."/>
            <person name="Hogues H."/>
            <person name="Cuomo C."/>
            <person name="Berriman M."/>
            <person name="Scherer S."/>
            <person name="Magee B.B."/>
            <person name="Whiteway M."/>
            <person name="Chibana H."/>
            <person name="Nantel A."/>
            <person name="Magee P.T."/>
        </authorList>
    </citation>
    <scope>GENOME REANNOTATION</scope>
    <source>
        <strain>SC5314 / ATCC MYA-2876</strain>
    </source>
</reference>
<reference key="5">
    <citation type="journal article" date="2013" name="Genome Biol.">
        <title>Assembly of a phased diploid Candida albicans genome facilitates allele-specific measurements and provides a simple model for repeat and indel structure.</title>
        <authorList>
            <person name="Muzzey D."/>
            <person name="Schwartz K."/>
            <person name="Weissman J.S."/>
            <person name="Sherlock G."/>
        </authorList>
    </citation>
    <scope>NUCLEOTIDE SEQUENCE [LARGE SCALE GENOMIC DNA]</scope>
    <scope>GENOME REANNOTATION</scope>
    <source>
        <strain>SC5314 / ATCC MYA-2876</strain>
    </source>
</reference>
<keyword id="KW-0002">3D-structure</keyword>
<keyword id="KW-0067">ATP-binding</keyword>
<keyword id="KW-0255">Endonuclease</keyword>
<keyword id="KW-0378">Hydrolase</keyword>
<keyword id="KW-0418">Kinase</keyword>
<keyword id="KW-0436">Ligase</keyword>
<keyword id="KW-0511">Multifunctional enzyme</keyword>
<keyword id="KW-0540">Nuclease</keyword>
<keyword id="KW-0547">Nucleotide-binding</keyword>
<keyword id="KW-1185">Reference proteome</keyword>
<keyword id="KW-0808">Transferase</keyword>
<keyword id="KW-0819">tRNA processing</keyword>
<evidence type="ECO:0000250" key="1"/>
<evidence type="ECO:0000305" key="2"/>
<evidence type="ECO:0007829" key="3">
    <source>
        <dbReference type="PDB" id="6TZM"/>
    </source>
</evidence>
<evidence type="ECO:0007829" key="4">
    <source>
        <dbReference type="PDB" id="6TZX"/>
    </source>
</evidence>
<evidence type="ECO:0007829" key="5">
    <source>
        <dbReference type="PDB" id="6U00"/>
    </source>
</evidence>
<evidence type="ECO:0007829" key="6">
    <source>
        <dbReference type="PDB" id="6U05"/>
    </source>
</evidence>
<feature type="chain" id="PRO_0000065634" description="tRNA ligase">
    <location>
        <begin position="1"/>
        <end position="832"/>
    </location>
</feature>
<feature type="active site" description="N6-AMP-lysine intermediate" evidence="1">
    <location>
        <position position="108"/>
    </location>
</feature>
<feature type="sequence conflict" description="In Ref. 1; AAA34373." evidence="2" ref="1">
    <original>Q</original>
    <variation>K</variation>
    <location>
        <position position="542"/>
    </location>
</feature>
<feature type="sequence conflict" description="In Ref. 1; AAA34373." evidence="2" ref="1">
    <original>I</original>
    <variation>M</variation>
    <location>
        <position position="783"/>
    </location>
</feature>
<feature type="strand" evidence="4">
    <location>
        <begin position="410"/>
        <end position="418"/>
    </location>
</feature>
<feature type="helix" evidence="4">
    <location>
        <begin position="425"/>
        <end position="435"/>
    </location>
</feature>
<feature type="strand" evidence="4">
    <location>
        <begin position="439"/>
        <end position="443"/>
    </location>
</feature>
<feature type="helix" evidence="4">
    <location>
        <begin position="444"/>
        <end position="446"/>
    </location>
</feature>
<feature type="helix" evidence="4">
    <location>
        <begin position="455"/>
        <end position="464"/>
    </location>
</feature>
<feature type="strand" evidence="4">
    <location>
        <begin position="470"/>
        <end position="475"/>
    </location>
</feature>
<feature type="helix" evidence="4">
    <location>
        <begin position="480"/>
        <end position="493"/>
    </location>
</feature>
<feature type="helix" evidence="4">
    <location>
        <begin position="494"/>
        <end position="496"/>
    </location>
</feature>
<feature type="strand" evidence="4">
    <location>
        <begin position="502"/>
        <end position="510"/>
    </location>
</feature>
<feature type="helix" evidence="4">
    <location>
        <begin position="518"/>
        <end position="532"/>
    </location>
</feature>
<feature type="helix" evidence="4">
    <location>
        <begin position="537"/>
        <end position="539"/>
    </location>
</feature>
<feature type="helix" evidence="4">
    <location>
        <begin position="545"/>
        <end position="558"/>
    </location>
</feature>
<feature type="helix" evidence="4">
    <location>
        <begin position="569"/>
        <end position="571"/>
    </location>
</feature>
<feature type="strand" evidence="4">
    <location>
        <begin position="573"/>
        <end position="577"/>
    </location>
</feature>
<feature type="strand" evidence="5">
    <location>
        <begin position="582"/>
        <end position="584"/>
    </location>
</feature>
<feature type="helix" evidence="4">
    <location>
        <begin position="589"/>
        <end position="604"/>
    </location>
</feature>
<feature type="turn" evidence="4">
    <location>
        <begin position="606"/>
        <end position="608"/>
    </location>
</feature>
<feature type="strand" evidence="3">
    <location>
        <begin position="609"/>
        <end position="611"/>
    </location>
</feature>
<feature type="helix" evidence="4">
    <location>
        <begin position="615"/>
        <end position="627"/>
    </location>
</feature>
<feature type="turn" evidence="6">
    <location>
        <begin position="634"/>
        <end position="636"/>
    </location>
</feature>
<feature type="strand" evidence="6">
    <location>
        <begin position="646"/>
        <end position="652"/>
    </location>
</feature>
<feature type="helix" evidence="6">
    <location>
        <begin position="654"/>
        <end position="659"/>
    </location>
</feature>
<feature type="turn" evidence="6">
    <location>
        <begin position="660"/>
        <end position="666"/>
    </location>
</feature>
<feature type="helix" evidence="6">
    <location>
        <begin position="668"/>
        <end position="670"/>
    </location>
</feature>
<feature type="helix" evidence="6">
    <location>
        <begin position="671"/>
        <end position="674"/>
    </location>
</feature>
<feature type="strand" evidence="6">
    <location>
        <begin position="679"/>
        <end position="687"/>
    </location>
</feature>
<feature type="helix" evidence="6">
    <location>
        <begin position="688"/>
        <end position="692"/>
    </location>
</feature>
<feature type="helix" evidence="6">
    <location>
        <begin position="695"/>
        <end position="707"/>
    </location>
</feature>
<feature type="strand" evidence="6">
    <location>
        <begin position="713"/>
        <end position="734"/>
    </location>
</feature>
<feature type="turn" evidence="6">
    <location>
        <begin position="735"/>
        <end position="737"/>
    </location>
</feature>
<feature type="strand" evidence="6">
    <location>
        <begin position="738"/>
        <end position="750"/>
    </location>
</feature>
<feature type="strand" evidence="6">
    <location>
        <begin position="767"/>
        <end position="772"/>
    </location>
</feature>
<feature type="helix" evidence="6">
    <location>
        <begin position="780"/>
        <end position="788"/>
    </location>
</feature>
<feature type="strand" evidence="6">
    <location>
        <begin position="800"/>
        <end position="805"/>
    </location>
</feature>
<feature type="strand" evidence="6">
    <location>
        <begin position="808"/>
        <end position="814"/>
    </location>
</feature>
<feature type="strand" evidence="6">
    <location>
        <begin position="821"/>
        <end position="830"/>
    </location>
</feature>
<name>TRNL_CANAL</name>